<proteinExistence type="inferred from homology"/>
<feature type="chain" id="PRO_1000067598" description="Large ribosomal subunit protein uL4">
    <location>
        <begin position="1"/>
        <end position="228"/>
    </location>
</feature>
<feature type="region of interest" description="Disordered" evidence="2">
    <location>
        <begin position="45"/>
        <end position="102"/>
    </location>
</feature>
<feature type="region of interest" description="Disordered" evidence="2">
    <location>
        <begin position="208"/>
        <end position="228"/>
    </location>
</feature>
<feature type="compositionally biased region" description="Low complexity" evidence="2">
    <location>
        <begin position="208"/>
        <end position="221"/>
    </location>
</feature>
<dbReference type="EMBL" id="AM420293">
    <property type="protein sequence ID" value="CAM05999.1"/>
    <property type="molecule type" value="Genomic_DNA"/>
</dbReference>
<dbReference type="RefSeq" id="WP_009948628.1">
    <property type="nucleotide sequence ID" value="NC_009142.1"/>
</dbReference>
<dbReference type="SMR" id="A4FPM4"/>
<dbReference type="STRING" id="405948.SACE_6835"/>
<dbReference type="KEGG" id="sen:SACE_6835"/>
<dbReference type="eggNOG" id="COG0088">
    <property type="taxonomic scope" value="Bacteria"/>
</dbReference>
<dbReference type="HOGENOM" id="CLU_041575_5_0_11"/>
<dbReference type="OrthoDB" id="9803201at2"/>
<dbReference type="Proteomes" id="UP000006728">
    <property type="component" value="Chromosome"/>
</dbReference>
<dbReference type="GO" id="GO:1990904">
    <property type="term" value="C:ribonucleoprotein complex"/>
    <property type="evidence" value="ECO:0007669"/>
    <property type="project" value="UniProtKB-KW"/>
</dbReference>
<dbReference type="GO" id="GO:0005840">
    <property type="term" value="C:ribosome"/>
    <property type="evidence" value="ECO:0007669"/>
    <property type="project" value="UniProtKB-KW"/>
</dbReference>
<dbReference type="GO" id="GO:0019843">
    <property type="term" value="F:rRNA binding"/>
    <property type="evidence" value="ECO:0007669"/>
    <property type="project" value="UniProtKB-UniRule"/>
</dbReference>
<dbReference type="GO" id="GO:0003735">
    <property type="term" value="F:structural constituent of ribosome"/>
    <property type="evidence" value="ECO:0007669"/>
    <property type="project" value="InterPro"/>
</dbReference>
<dbReference type="GO" id="GO:0006412">
    <property type="term" value="P:translation"/>
    <property type="evidence" value="ECO:0007669"/>
    <property type="project" value="UniProtKB-UniRule"/>
</dbReference>
<dbReference type="FunFam" id="3.40.1370.10:FF:000004">
    <property type="entry name" value="50S ribosomal protein L4"/>
    <property type="match status" value="1"/>
</dbReference>
<dbReference type="Gene3D" id="3.40.1370.10">
    <property type="match status" value="1"/>
</dbReference>
<dbReference type="HAMAP" id="MF_01328_B">
    <property type="entry name" value="Ribosomal_uL4_B"/>
    <property type="match status" value="1"/>
</dbReference>
<dbReference type="InterPro" id="IPR002136">
    <property type="entry name" value="Ribosomal_uL4"/>
</dbReference>
<dbReference type="InterPro" id="IPR013005">
    <property type="entry name" value="Ribosomal_uL4-like"/>
</dbReference>
<dbReference type="InterPro" id="IPR023574">
    <property type="entry name" value="Ribosomal_uL4_dom_sf"/>
</dbReference>
<dbReference type="NCBIfam" id="TIGR03953">
    <property type="entry name" value="rplD_bact"/>
    <property type="match status" value="1"/>
</dbReference>
<dbReference type="PANTHER" id="PTHR10746">
    <property type="entry name" value="50S RIBOSOMAL PROTEIN L4"/>
    <property type="match status" value="1"/>
</dbReference>
<dbReference type="PANTHER" id="PTHR10746:SF6">
    <property type="entry name" value="LARGE RIBOSOMAL SUBUNIT PROTEIN UL4M"/>
    <property type="match status" value="1"/>
</dbReference>
<dbReference type="Pfam" id="PF00573">
    <property type="entry name" value="Ribosomal_L4"/>
    <property type="match status" value="1"/>
</dbReference>
<dbReference type="SUPFAM" id="SSF52166">
    <property type="entry name" value="Ribosomal protein L4"/>
    <property type="match status" value="1"/>
</dbReference>
<accession>A4FPM4</accession>
<keyword id="KW-1185">Reference proteome</keyword>
<keyword id="KW-0687">Ribonucleoprotein</keyword>
<keyword id="KW-0689">Ribosomal protein</keyword>
<keyword id="KW-0694">RNA-binding</keyword>
<keyword id="KW-0699">rRNA-binding</keyword>
<name>RL4_SACEN</name>
<gene>
    <name evidence="1" type="primary">rplD</name>
    <name type="ordered locus">SACE_6835</name>
</gene>
<organism>
    <name type="scientific">Saccharopolyspora erythraea (strain ATCC 11635 / DSM 40517 / JCM 4748 / NBRC 13426 / NCIMB 8594 / NRRL 2338)</name>
    <dbReference type="NCBI Taxonomy" id="405948"/>
    <lineage>
        <taxon>Bacteria</taxon>
        <taxon>Bacillati</taxon>
        <taxon>Actinomycetota</taxon>
        <taxon>Actinomycetes</taxon>
        <taxon>Pseudonocardiales</taxon>
        <taxon>Pseudonocardiaceae</taxon>
        <taxon>Saccharopolyspora</taxon>
    </lineage>
</organism>
<sequence length="228" mass="24429">MSVTLDVRTPDGKTDGTVELPAEIFDVQANIALMHQVVVAQLAAGRQGTHATKTRGQVSGGGKKPYRQKGTGNARQGSIRAPQFTGGGTVHGPQPRDYSQRTPKKMKVAALRGALSDRVRAGQLHVVSHVVGGEQPSTKQARTAVRTWTEAKRVLVVLNKSEETSWLSLRNLQNVHLIDPSQLNTYDVLVNDDVVFTKAAFERFVAGPAKGKTAKAAATSGEAEEANQ</sequence>
<comment type="function">
    <text evidence="1">One of the primary rRNA binding proteins, this protein initially binds near the 5'-end of the 23S rRNA. It is important during the early stages of 50S assembly. It makes multiple contacts with different domains of the 23S rRNA in the assembled 50S subunit and ribosome.</text>
</comment>
<comment type="function">
    <text evidence="1">Forms part of the polypeptide exit tunnel.</text>
</comment>
<comment type="subunit">
    <text evidence="1">Part of the 50S ribosomal subunit.</text>
</comment>
<comment type="similarity">
    <text evidence="1">Belongs to the universal ribosomal protein uL4 family.</text>
</comment>
<evidence type="ECO:0000255" key="1">
    <source>
        <dbReference type="HAMAP-Rule" id="MF_01328"/>
    </source>
</evidence>
<evidence type="ECO:0000256" key="2">
    <source>
        <dbReference type="SAM" id="MobiDB-lite"/>
    </source>
</evidence>
<evidence type="ECO:0000305" key="3"/>
<protein>
    <recommendedName>
        <fullName evidence="1">Large ribosomal subunit protein uL4</fullName>
    </recommendedName>
    <alternativeName>
        <fullName evidence="3">50S ribosomal protein L4</fullName>
    </alternativeName>
</protein>
<reference key="1">
    <citation type="journal article" date="2007" name="Nat. Biotechnol.">
        <title>Complete genome sequence of the erythromycin-producing bacterium Saccharopolyspora erythraea NRRL23338.</title>
        <authorList>
            <person name="Oliynyk M."/>
            <person name="Samborskyy M."/>
            <person name="Lester J.B."/>
            <person name="Mironenko T."/>
            <person name="Scott N."/>
            <person name="Dickens S."/>
            <person name="Haydock S.F."/>
            <person name="Leadlay P.F."/>
        </authorList>
    </citation>
    <scope>NUCLEOTIDE SEQUENCE [LARGE SCALE GENOMIC DNA]</scope>
    <source>
        <strain>ATCC 11635 / DSM 40517 / JCM 4748 / NBRC 13426 / NCIMB 8594 / NRRL 2338</strain>
    </source>
</reference>